<proteinExistence type="inferred from homology"/>
<comment type="catalytic activity">
    <reaction evidence="1">
        <text>(S)-2,3,4,5-tetrahydrodipicolinate + succinyl-CoA + H2O = (S)-2-succinylamino-6-oxoheptanedioate + CoA</text>
        <dbReference type="Rhea" id="RHEA:17325"/>
        <dbReference type="ChEBI" id="CHEBI:15377"/>
        <dbReference type="ChEBI" id="CHEBI:15685"/>
        <dbReference type="ChEBI" id="CHEBI:16845"/>
        <dbReference type="ChEBI" id="CHEBI:57287"/>
        <dbReference type="ChEBI" id="CHEBI:57292"/>
        <dbReference type="EC" id="2.3.1.117"/>
    </reaction>
</comment>
<comment type="pathway">
    <text evidence="1">Amino-acid biosynthesis; L-lysine biosynthesis via DAP pathway; LL-2,6-diaminopimelate from (S)-tetrahydrodipicolinate (succinylase route): step 1/3.</text>
</comment>
<comment type="subunit">
    <text evidence="1">Homotrimer.</text>
</comment>
<comment type="subcellular location">
    <subcellularLocation>
        <location evidence="1">Cytoplasm</location>
    </subcellularLocation>
</comment>
<comment type="similarity">
    <text evidence="1">Belongs to the transferase hexapeptide repeat family.</text>
</comment>
<gene>
    <name evidence="1" type="primary">dapD</name>
    <name type="ordered locus">SPA0219</name>
</gene>
<dbReference type="EC" id="2.3.1.117" evidence="1"/>
<dbReference type="EMBL" id="CP000026">
    <property type="protein sequence ID" value="AAV76249.1"/>
    <property type="molecule type" value="Genomic_DNA"/>
</dbReference>
<dbReference type="RefSeq" id="WP_001186673.1">
    <property type="nucleotide sequence ID" value="NC_006511.1"/>
</dbReference>
<dbReference type="SMR" id="Q5PD57"/>
<dbReference type="KEGG" id="spt:SPA0219"/>
<dbReference type="HOGENOM" id="CLU_050859_0_1_6"/>
<dbReference type="UniPathway" id="UPA00034">
    <property type="reaction ID" value="UER00019"/>
</dbReference>
<dbReference type="Proteomes" id="UP000008185">
    <property type="component" value="Chromosome"/>
</dbReference>
<dbReference type="GO" id="GO:0005737">
    <property type="term" value="C:cytoplasm"/>
    <property type="evidence" value="ECO:0007669"/>
    <property type="project" value="UniProtKB-SubCell"/>
</dbReference>
<dbReference type="GO" id="GO:0008666">
    <property type="term" value="F:2,3,4,5-tetrahydropyridine-2,6-dicarboxylate N-succinyltransferase activity"/>
    <property type="evidence" value="ECO:0007669"/>
    <property type="project" value="UniProtKB-UniRule"/>
</dbReference>
<dbReference type="GO" id="GO:0016779">
    <property type="term" value="F:nucleotidyltransferase activity"/>
    <property type="evidence" value="ECO:0007669"/>
    <property type="project" value="TreeGrafter"/>
</dbReference>
<dbReference type="GO" id="GO:0019877">
    <property type="term" value="P:diaminopimelate biosynthetic process"/>
    <property type="evidence" value="ECO:0007669"/>
    <property type="project" value="UniProtKB-UniRule"/>
</dbReference>
<dbReference type="GO" id="GO:0009089">
    <property type="term" value="P:lysine biosynthetic process via diaminopimelate"/>
    <property type="evidence" value="ECO:0007669"/>
    <property type="project" value="UniProtKB-UniRule"/>
</dbReference>
<dbReference type="CDD" id="cd03350">
    <property type="entry name" value="LbH_THP_succinylT"/>
    <property type="match status" value="1"/>
</dbReference>
<dbReference type="FunFam" id="1.10.166.10:FF:000001">
    <property type="entry name" value="2,3,4,5-tetrahydropyridine-2,6-dicarboxylate N-succinyltransferase"/>
    <property type="match status" value="1"/>
</dbReference>
<dbReference type="FunFam" id="2.160.10.10:FF:000004">
    <property type="entry name" value="2,3,4,5-tetrahydropyridine-2,6-dicarboxylate N-succinyltransferase"/>
    <property type="match status" value="1"/>
</dbReference>
<dbReference type="Gene3D" id="2.160.10.10">
    <property type="entry name" value="Hexapeptide repeat proteins"/>
    <property type="match status" value="1"/>
</dbReference>
<dbReference type="Gene3D" id="1.10.166.10">
    <property type="entry name" value="Tetrahydrodipicolinate-N-succinyltransferase, N-terminal domain"/>
    <property type="match status" value="1"/>
</dbReference>
<dbReference type="HAMAP" id="MF_00811">
    <property type="entry name" value="DapD"/>
    <property type="match status" value="1"/>
</dbReference>
<dbReference type="InterPro" id="IPR005664">
    <property type="entry name" value="DapD_Trfase_Hexpep_rpt_fam"/>
</dbReference>
<dbReference type="InterPro" id="IPR001451">
    <property type="entry name" value="Hexapep"/>
</dbReference>
<dbReference type="InterPro" id="IPR018357">
    <property type="entry name" value="Hexapep_transf_CS"/>
</dbReference>
<dbReference type="InterPro" id="IPR023180">
    <property type="entry name" value="THP_succinylTrfase_dom1"/>
</dbReference>
<dbReference type="InterPro" id="IPR037133">
    <property type="entry name" value="THP_succinylTrfase_N_sf"/>
</dbReference>
<dbReference type="InterPro" id="IPR011004">
    <property type="entry name" value="Trimer_LpxA-like_sf"/>
</dbReference>
<dbReference type="NCBIfam" id="TIGR00965">
    <property type="entry name" value="dapD"/>
    <property type="match status" value="1"/>
</dbReference>
<dbReference type="NCBIfam" id="NF008808">
    <property type="entry name" value="PRK11830.1"/>
    <property type="match status" value="1"/>
</dbReference>
<dbReference type="PANTHER" id="PTHR19136:SF52">
    <property type="entry name" value="2,3,4,5-TETRAHYDROPYRIDINE-2,6-DICARBOXYLATE N-SUCCINYLTRANSFERASE"/>
    <property type="match status" value="1"/>
</dbReference>
<dbReference type="PANTHER" id="PTHR19136">
    <property type="entry name" value="MOLYBDENUM COFACTOR GUANYLYLTRANSFERASE"/>
    <property type="match status" value="1"/>
</dbReference>
<dbReference type="Pfam" id="PF14602">
    <property type="entry name" value="Hexapep_2"/>
    <property type="match status" value="1"/>
</dbReference>
<dbReference type="Pfam" id="PF14805">
    <property type="entry name" value="THDPS_N_2"/>
    <property type="match status" value="1"/>
</dbReference>
<dbReference type="SUPFAM" id="SSF51161">
    <property type="entry name" value="Trimeric LpxA-like enzymes"/>
    <property type="match status" value="1"/>
</dbReference>
<dbReference type="PROSITE" id="PS00101">
    <property type="entry name" value="HEXAPEP_TRANSFERASES"/>
    <property type="match status" value="1"/>
</dbReference>
<name>DAPD_SALPA</name>
<keyword id="KW-0012">Acyltransferase</keyword>
<keyword id="KW-0028">Amino-acid biosynthesis</keyword>
<keyword id="KW-0963">Cytoplasm</keyword>
<keyword id="KW-0220">Diaminopimelate biosynthesis</keyword>
<keyword id="KW-0457">Lysine biosynthesis</keyword>
<keyword id="KW-0677">Repeat</keyword>
<keyword id="KW-0808">Transferase</keyword>
<evidence type="ECO:0000255" key="1">
    <source>
        <dbReference type="HAMAP-Rule" id="MF_00811"/>
    </source>
</evidence>
<sequence length="274" mass="29852">MQQLQNVIETAFERRADITPANVDTVTREAVNQVISLLDSGALRVAEKIDGQWVTHQWLKKAVLLSFRINDNQVIDGAESRYFDKVPMKFADYDEARFQKEGFRVVPPAAVRQGAFIARNTVLMPSYVNIGAYVDEGTMVDTWATVGSCAQIGKNVHLSGGVGIGGVLEPLQANPTIIEDNCFIGARSEVVEGVIVEEGSVISMGVYLGQSTKIYDRETGEVHYGRVPAGSVVVSGNLPSKDGKYSLYCAVIVKKVDAKTRGKVGINELLRTID</sequence>
<protein>
    <recommendedName>
        <fullName evidence="1">2,3,4,5-tetrahydropyridine-2,6-dicarboxylate N-succinyltransferase</fullName>
        <ecNumber evidence="1">2.3.1.117</ecNumber>
    </recommendedName>
    <alternativeName>
        <fullName evidence="1">Tetrahydrodipicolinate N-succinyltransferase</fullName>
        <shortName evidence="1">THDP succinyltransferase</shortName>
        <shortName evidence="1">THP succinyltransferase</shortName>
        <shortName evidence="1">Tetrahydropicolinate succinylase</shortName>
    </alternativeName>
</protein>
<feature type="chain" id="PRO_0000196967" description="2,3,4,5-tetrahydropyridine-2,6-dicarboxylate N-succinyltransferase">
    <location>
        <begin position="1"/>
        <end position="274"/>
    </location>
</feature>
<feature type="binding site" evidence="1">
    <location>
        <position position="104"/>
    </location>
    <ligand>
        <name>substrate</name>
    </ligand>
</feature>
<feature type="binding site" evidence="1">
    <location>
        <position position="141"/>
    </location>
    <ligand>
        <name>substrate</name>
    </ligand>
</feature>
<accession>Q5PD57</accession>
<reference key="1">
    <citation type="journal article" date="2004" name="Nat. Genet.">
        <title>Comparison of genome degradation in Paratyphi A and Typhi, human-restricted serovars of Salmonella enterica that cause typhoid.</title>
        <authorList>
            <person name="McClelland M."/>
            <person name="Sanderson K.E."/>
            <person name="Clifton S.W."/>
            <person name="Latreille P."/>
            <person name="Porwollik S."/>
            <person name="Sabo A."/>
            <person name="Meyer R."/>
            <person name="Bieri T."/>
            <person name="Ozersky P."/>
            <person name="McLellan M."/>
            <person name="Harkins C.R."/>
            <person name="Wang C."/>
            <person name="Nguyen C."/>
            <person name="Berghoff A."/>
            <person name="Elliott G."/>
            <person name="Kohlberg S."/>
            <person name="Strong C."/>
            <person name="Du F."/>
            <person name="Carter J."/>
            <person name="Kremizki C."/>
            <person name="Layman D."/>
            <person name="Leonard S."/>
            <person name="Sun H."/>
            <person name="Fulton L."/>
            <person name="Nash W."/>
            <person name="Miner T."/>
            <person name="Minx P."/>
            <person name="Delehaunty K."/>
            <person name="Fronick C."/>
            <person name="Magrini V."/>
            <person name="Nhan M."/>
            <person name="Warren W."/>
            <person name="Florea L."/>
            <person name="Spieth J."/>
            <person name="Wilson R.K."/>
        </authorList>
    </citation>
    <scope>NUCLEOTIDE SEQUENCE [LARGE SCALE GENOMIC DNA]</scope>
    <source>
        <strain>ATCC 9150 / SARB42</strain>
    </source>
</reference>
<organism>
    <name type="scientific">Salmonella paratyphi A (strain ATCC 9150 / SARB42)</name>
    <dbReference type="NCBI Taxonomy" id="295319"/>
    <lineage>
        <taxon>Bacteria</taxon>
        <taxon>Pseudomonadati</taxon>
        <taxon>Pseudomonadota</taxon>
        <taxon>Gammaproteobacteria</taxon>
        <taxon>Enterobacterales</taxon>
        <taxon>Enterobacteriaceae</taxon>
        <taxon>Salmonella</taxon>
    </lineage>
</organism>